<evidence type="ECO:0000255" key="1"/>
<evidence type="ECO:0000255" key="2">
    <source>
        <dbReference type="PROSITE-ProRule" id="PRU00114"/>
    </source>
</evidence>
<evidence type="ECO:0000269" key="3">
    <source>
    </source>
</evidence>
<evidence type="ECO:0000269" key="4">
    <source>
    </source>
</evidence>
<evidence type="ECO:0000269" key="5">
    <source>
    </source>
</evidence>
<evidence type="ECO:0000269" key="6">
    <source>
    </source>
</evidence>
<evidence type="ECO:0000269" key="7">
    <source>
    </source>
</evidence>
<evidence type="ECO:0000269" key="8">
    <source>
    </source>
</evidence>
<evidence type="ECO:0000269" key="9">
    <source>
    </source>
</evidence>
<evidence type="ECO:0000303" key="10">
    <source>
    </source>
</evidence>
<evidence type="ECO:0000303" key="11">
    <source>
    </source>
</evidence>
<evidence type="ECO:0000303" key="12">
    <source>
    </source>
</evidence>
<evidence type="ECO:0000305" key="13"/>
<evidence type="ECO:0000312" key="14">
    <source>
        <dbReference type="MGI" id="MGI:2658978"/>
    </source>
</evidence>
<evidence type="ECO:0007829" key="15">
    <source>
        <dbReference type="PDB" id="1XAU"/>
    </source>
</evidence>
<name>BTLA_MOUSE</name>
<reference key="1">
    <citation type="journal article" date="2003" name="Nat. Immunol.">
        <title>BTLA is a lymphocyte inhibitory receptor with similarities to CTLA-4 and PD-1.</title>
        <authorList>
            <person name="Watanabe N."/>
            <person name="Gavrieli M."/>
            <person name="Sedy J.R."/>
            <person name="Yang J."/>
            <person name="Fallarino F."/>
            <person name="Loftin S.K."/>
            <person name="Hurchla M.A."/>
            <person name="Zimmerman N."/>
            <person name="Sim J."/>
            <person name="Zang X."/>
            <person name="Murphy T.L."/>
            <person name="Russell J.H."/>
            <person name="Allison J.P."/>
            <person name="Murphy K.M."/>
        </authorList>
    </citation>
    <scope>NUCLEOTIDE SEQUENCE [MRNA] (ISOFORMS 1 AND 2)</scope>
    <scope>MUTAGENESIS OF TYR-245; TYR-274 AND TYR-299</scope>
    <scope>GLYCOSYLATION</scope>
    <scope>TISSUE SPECIFICITY</scope>
    <scope>INTERACTION WITH PTPN6 AND PTPN11</scope>
    <scope>DISRUPTION PHENOTYPE</scope>
    <scope>VARIANTS GLU-41; 45-THR--THR-47 DELINS ASN-ILE-LYS; HIS-52; TRP-55; GLU-63; TRP-85; GLY-91 AND ARG-102</scope>
    <scope>FUNCTION</scope>
    <scope>SUBCELLULAR LOCATION</scope>
    <source>
        <strain>129/SvEv</strain>
    </source>
</reference>
<reference key="2">
    <citation type="journal article" date="2005" name="Science">
        <title>The transcriptional landscape of the mammalian genome.</title>
        <authorList>
            <person name="Carninci P."/>
            <person name="Kasukawa T."/>
            <person name="Katayama S."/>
            <person name="Gough J."/>
            <person name="Frith M.C."/>
            <person name="Maeda N."/>
            <person name="Oyama R."/>
            <person name="Ravasi T."/>
            <person name="Lenhard B."/>
            <person name="Wells C."/>
            <person name="Kodzius R."/>
            <person name="Shimokawa K."/>
            <person name="Bajic V.B."/>
            <person name="Brenner S.E."/>
            <person name="Batalov S."/>
            <person name="Forrest A.R."/>
            <person name="Zavolan M."/>
            <person name="Davis M.J."/>
            <person name="Wilming L.G."/>
            <person name="Aidinis V."/>
            <person name="Allen J.E."/>
            <person name="Ambesi-Impiombato A."/>
            <person name="Apweiler R."/>
            <person name="Aturaliya R.N."/>
            <person name="Bailey T.L."/>
            <person name="Bansal M."/>
            <person name="Baxter L."/>
            <person name="Beisel K.W."/>
            <person name="Bersano T."/>
            <person name="Bono H."/>
            <person name="Chalk A.M."/>
            <person name="Chiu K.P."/>
            <person name="Choudhary V."/>
            <person name="Christoffels A."/>
            <person name="Clutterbuck D.R."/>
            <person name="Crowe M.L."/>
            <person name="Dalla E."/>
            <person name="Dalrymple B.P."/>
            <person name="de Bono B."/>
            <person name="Della Gatta G."/>
            <person name="di Bernardo D."/>
            <person name="Down T."/>
            <person name="Engstrom P."/>
            <person name="Fagiolini M."/>
            <person name="Faulkner G."/>
            <person name="Fletcher C.F."/>
            <person name="Fukushima T."/>
            <person name="Furuno M."/>
            <person name="Futaki S."/>
            <person name="Gariboldi M."/>
            <person name="Georgii-Hemming P."/>
            <person name="Gingeras T.R."/>
            <person name="Gojobori T."/>
            <person name="Green R.E."/>
            <person name="Gustincich S."/>
            <person name="Harbers M."/>
            <person name="Hayashi Y."/>
            <person name="Hensch T.K."/>
            <person name="Hirokawa N."/>
            <person name="Hill D."/>
            <person name="Huminiecki L."/>
            <person name="Iacono M."/>
            <person name="Ikeo K."/>
            <person name="Iwama A."/>
            <person name="Ishikawa T."/>
            <person name="Jakt M."/>
            <person name="Kanapin A."/>
            <person name="Katoh M."/>
            <person name="Kawasawa Y."/>
            <person name="Kelso J."/>
            <person name="Kitamura H."/>
            <person name="Kitano H."/>
            <person name="Kollias G."/>
            <person name="Krishnan S.P."/>
            <person name="Kruger A."/>
            <person name="Kummerfeld S.K."/>
            <person name="Kurochkin I.V."/>
            <person name="Lareau L.F."/>
            <person name="Lazarevic D."/>
            <person name="Lipovich L."/>
            <person name="Liu J."/>
            <person name="Liuni S."/>
            <person name="McWilliam S."/>
            <person name="Madan Babu M."/>
            <person name="Madera M."/>
            <person name="Marchionni L."/>
            <person name="Matsuda H."/>
            <person name="Matsuzawa S."/>
            <person name="Miki H."/>
            <person name="Mignone F."/>
            <person name="Miyake S."/>
            <person name="Morris K."/>
            <person name="Mottagui-Tabar S."/>
            <person name="Mulder N."/>
            <person name="Nakano N."/>
            <person name="Nakauchi H."/>
            <person name="Ng P."/>
            <person name="Nilsson R."/>
            <person name="Nishiguchi S."/>
            <person name="Nishikawa S."/>
            <person name="Nori F."/>
            <person name="Ohara O."/>
            <person name="Okazaki Y."/>
            <person name="Orlando V."/>
            <person name="Pang K.C."/>
            <person name="Pavan W.J."/>
            <person name="Pavesi G."/>
            <person name="Pesole G."/>
            <person name="Petrovsky N."/>
            <person name="Piazza S."/>
            <person name="Reed J."/>
            <person name="Reid J.F."/>
            <person name="Ring B.Z."/>
            <person name="Ringwald M."/>
            <person name="Rost B."/>
            <person name="Ruan Y."/>
            <person name="Salzberg S.L."/>
            <person name="Sandelin A."/>
            <person name="Schneider C."/>
            <person name="Schoenbach C."/>
            <person name="Sekiguchi K."/>
            <person name="Semple C.A."/>
            <person name="Seno S."/>
            <person name="Sessa L."/>
            <person name="Sheng Y."/>
            <person name="Shibata Y."/>
            <person name="Shimada H."/>
            <person name="Shimada K."/>
            <person name="Silva D."/>
            <person name="Sinclair B."/>
            <person name="Sperling S."/>
            <person name="Stupka E."/>
            <person name="Sugiura K."/>
            <person name="Sultana R."/>
            <person name="Takenaka Y."/>
            <person name="Taki K."/>
            <person name="Tammoja K."/>
            <person name="Tan S.L."/>
            <person name="Tang S."/>
            <person name="Taylor M.S."/>
            <person name="Tegner J."/>
            <person name="Teichmann S.A."/>
            <person name="Ueda H.R."/>
            <person name="van Nimwegen E."/>
            <person name="Verardo R."/>
            <person name="Wei C.L."/>
            <person name="Yagi K."/>
            <person name="Yamanishi H."/>
            <person name="Zabarovsky E."/>
            <person name="Zhu S."/>
            <person name="Zimmer A."/>
            <person name="Hide W."/>
            <person name="Bult C."/>
            <person name="Grimmond S.M."/>
            <person name="Teasdale R.D."/>
            <person name="Liu E.T."/>
            <person name="Brusic V."/>
            <person name="Quackenbush J."/>
            <person name="Wahlestedt C."/>
            <person name="Mattick J.S."/>
            <person name="Hume D.A."/>
            <person name="Kai C."/>
            <person name="Sasaki D."/>
            <person name="Tomaru Y."/>
            <person name="Fukuda S."/>
            <person name="Kanamori-Katayama M."/>
            <person name="Suzuki M."/>
            <person name="Aoki J."/>
            <person name="Arakawa T."/>
            <person name="Iida J."/>
            <person name="Imamura K."/>
            <person name="Itoh M."/>
            <person name="Kato T."/>
            <person name="Kawaji H."/>
            <person name="Kawagashira N."/>
            <person name="Kawashima T."/>
            <person name="Kojima M."/>
            <person name="Kondo S."/>
            <person name="Konno H."/>
            <person name="Nakano K."/>
            <person name="Ninomiya N."/>
            <person name="Nishio T."/>
            <person name="Okada M."/>
            <person name="Plessy C."/>
            <person name="Shibata K."/>
            <person name="Shiraki T."/>
            <person name="Suzuki S."/>
            <person name="Tagami M."/>
            <person name="Waki K."/>
            <person name="Watahiki A."/>
            <person name="Okamura-Oho Y."/>
            <person name="Suzuki H."/>
            <person name="Kawai J."/>
            <person name="Hayashizaki Y."/>
        </authorList>
    </citation>
    <scope>NUCLEOTIDE SEQUENCE [LARGE SCALE MRNA] (ISOFORM 3)</scope>
    <scope>VARIANT THR-143</scope>
    <source>
        <strain>C57BL/6J</strain>
        <tissue>Thymus</tissue>
    </source>
</reference>
<reference key="3">
    <citation type="journal article" date="2003" name="Biochem. Biophys. Res. Commun.">
        <title>Characterization of phosphotyrosine binding motifs in the cytoplasmic domain of B and T lymphocyte attenuator required for association with protein tyrosine phosphatases SHP-1 and SHP-2.</title>
        <authorList>
            <person name="Gavrieli M."/>
            <person name="Watanabe N."/>
            <person name="Loftin S.K."/>
            <person name="Murphy T.L."/>
            <person name="Murphy K.M."/>
        </authorList>
    </citation>
    <scope>MUTAGENESIS OF TYR-245; TYR-274 AND TYR-299</scope>
    <scope>INTERACTION WITH PTPN6 AND PTPN11</scope>
    <scope>FUNCTION</scope>
</reference>
<reference key="4">
    <citation type="journal article" date="2005" name="Nat. Immunol.">
        <title>B and T lymphocyte attenuator regulates T cell activation through interaction with herpesvirus entry mediator.</title>
        <authorList>
            <person name="Sedy J.R."/>
            <person name="Gavrieli M."/>
            <person name="Potter K.G."/>
            <person name="Hurchla M.A."/>
            <person name="Lindsley R.C."/>
            <person name="Hildner K."/>
            <person name="Scheu S."/>
            <person name="Pfeffer K."/>
            <person name="Ware C.F."/>
            <person name="Murphy T.L."/>
            <person name="Murphy K.M."/>
        </authorList>
    </citation>
    <scope>INTERACTION WITH TNFRSF14</scope>
    <scope>PHOSPHORYLATION</scope>
</reference>
<reference key="5">
    <citation type="journal article" date="2005" name="J. Immunol.">
        <title>B and T lymphocyte attenuator exhibits structural and expression polymorphisms and is highly induced in anergic CD4+ T cells.</title>
        <authorList>
            <person name="Hurchla M.A."/>
            <person name="Sedy J.R."/>
            <person name="Gavrieli M."/>
            <person name="Drake C.G."/>
            <person name="Murphy T.L."/>
            <person name="Murphy K.M."/>
        </authorList>
    </citation>
    <scope>TISSUE SPECIFICITY</scope>
    <scope>POLYMORPHISM</scope>
</reference>
<reference key="6">
    <citation type="journal article" date="2009" name="J. Immunol.">
        <title>T cell intrinsic heterodimeric complexes between HVEM and BTLA determine receptivity to the surrounding microenvironment.</title>
        <authorList>
            <person name="Cheung T.C."/>
            <person name="Oborne L.M."/>
            <person name="Steinberg M.W."/>
            <person name="Macauley M.G."/>
            <person name="Fukuyama S."/>
            <person name="Sanjo H."/>
            <person name="D'Souza C."/>
            <person name="Norris P.S."/>
            <person name="Pfeffer K."/>
            <person name="Murphy K.M."/>
            <person name="Kronenberg M."/>
            <person name="Spear P.G."/>
            <person name="Ware C.F."/>
        </authorList>
    </citation>
    <scope>FUNCTION</scope>
    <scope>SUBUNIT</scope>
    <scope>INTERACTION WITH TNFRSF14</scope>
</reference>
<reference key="7">
    <citation type="journal article" date="2008" name="J. Immunol.">
        <title>Structural determinants of herpesvirus entry mediator recognition by murine B and T lymphocyte attenuator.</title>
        <authorList>
            <person name="Nelson C.A."/>
            <person name="Fremont M.D."/>
            <person name="Sedy J.R."/>
            <person name="Norris P.S."/>
            <person name="Ware C.F."/>
            <person name="Murphy K.M."/>
            <person name="Fremont D.H."/>
        </authorList>
    </citation>
    <scope>X-RAY CRYSTALLOGRAPHY (1.8 ANGSTROMS) OF 30-150</scope>
    <scope>MUTAGENESIS OF LEU-44; ARG-48; PRO-65 AND HIS-136</scope>
    <scope>INTERACTION WITH TNFRSF14/HVEM</scope>
    <scope>DISULFIDE BONDS</scope>
</reference>
<sequence>MKTVPAMLGTPRLFREFFILHLGLWSILCEKATKRNDEECPVQLTITRNSKQSARTGELFKIQCPVKYCVHRPNVTWCKHNGTICVPLEVSPQLYTSWEENQSVPVFVLHFKPIHLSDNGSYSCSTNFNSQVINSHSVTIHVRERTQNSSEHPLITVSDIPDATNASGPSTMEERPGRTWLLYTLLPLGALLLLLACVCLLCFLKRIQGKEKKPSDLAGRDTNLVDIPASSRTNHQALPSGTGIYDNDPWSSMQDESELTISLQSERNNQGIVYASLNHCVIGRNPRQENNMQEAPTEYASICVRS</sequence>
<accession>Q7TSA3</accession>
<comment type="function">
    <text evidence="3 4 9">Inhibitory receptor on lymphocytes that negatively regulates antigen receptor signaling via PTPN6/SHP-1 and PTPN11/SHP-2 (PubMed:12796776, PubMed:14652006). May interact in cis (on the same cell) or in trans (on other cells) with TNFRSF14 (PubMed:19915044). In cis interactions, appears to play an immune regulatory role inhibiting in trans interactions in naive T cells to maintain a resting state. In trans interactions, can predominate during adaptive immune response to provide survival signals to effector T cells (PubMed:19915044).</text>
</comment>
<comment type="subunit">
    <text evidence="3 4 5 8 9">Interacts with tyrosine phosphatases PTPN6/SHP-1 and PTPN11/SHP-2 (PubMed:12796776, PubMed:14652006). Interacts with TNFRSF14/HVEM (via cysteine-rich domain 1) (PubMed:19915044).</text>
</comment>
<comment type="subcellular location">
    <subcellularLocation>
        <location evidence="3">Cell membrane</location>
        <topology evidence="13">Single-pass type I membrane protein</topology>
    </subcellularLocation>
</comment>
<comment type="alternative products">
    <event type="alternative splicing"/>
    <isoform>
        <id>Q7TSA3-1</id>
        <name>1</name>
        <sequence type="displayed"/>
    </isoform>
    <isoform>
        <id>Q7TSA3-2</id>
        <name>2</name>
        <sequence type="described" ref="VSP_014836"/>
    </isoform>
    <isoform>
        <id>Q7TSA3-3</id>
        <name>3</name>
        <sequence type="described" ref="VSP_014837"/>
    </isoform>
</comment>
<comment type="tissue specificity">
    <text evidence="3 6">Expressed in splenic T- and B-cells as well as lymph node tissues but very weakly in somatic tissues. Also expressed in macrophages, NK cells and dendritic cells. A polymorphic tissue distribution between several strains is seen.</text>
</comment>
<comment type="PTM">
    <text evidence="5">Phosphorylated on Tyr residues by TNFRSF14 and by antigen receptors cross-linking, both inducing association with PTPN6 and PTPN11.</text>
</comment>
<comment type="PTM">
    <text evidence="3">N-glycosylated.</text>
</comment>
<comment type="disruption phenotype">
    <text evidence="3">Mice exhibit no developmental defects in T- or B-cells in thymus or bone marrow, but increased antibody responses and sensitivity to antigen-induced 'experimental autoimmune encephalomyelitis'. T-cells lacking Btla show increased proliferation with a heightened response to anti-CD3 and a slightly greater response to stimulation with anti-IgM.</text>
</comment>
<gene>
    <name evidence="10 14" type="primary">Btla</name>
</gene>
<feature type="signal peptide" evidence="1">
    <location>
        <begin position="1"/>
        <end position="29"/>
    </location>
</feature>
<feature type="chain" id="PRO_0000014524" description="B- and T-lymphocyte attenuator">
    <location>
        <begin position="30"/>
        <end position="306"/>
    </location>
</feature>
<feature type="topological domain" description="Extracellular" evidence="1">
    <location>
        <begin position="30"/>
        <end position="183"/>
    </location>
</feature>
<feature type="transmembrane region" description="Helical" evidence="1">
    <location>
        <begin position="184"/>
        <end position="204"/>
    </location>
</feature>
<feature type="topological domain" description="Cytoplasmic" evidence="1">
    <location>
        <begin position="205"/>
        <end position="306"/>
    </location>
</feature>
<feature type="domain" description="Ig-like V-type">
    <location>
        <begin position="37"/>
        <end position="139"/>
    </location>
</feature>
<feature type="glycosylation site" description="N-linked (GlcNAc...) asparagine" evidence="1">
    <location>
        <position position="74"/>
    </location>
</feature>
<feature type="glycosylation site" description="N-linked (GlcNAc...) asparagine" evidence="1">
    <location>
        <position position="81"/>
    </location>
</feature>
<feature type="glycosylation site" description="N-linked (GlcNAc...) asparagine" evidence="1">
    <location>
        <position position="101"/>
    </location>
</feature>
<feature type="glycosylation site" description="N-linked (GlcNAc...) asparagine" evidence="1">
    <location>
        <position position="119"/>
    </location>
</feature>
<feature type="glycosylation site" description="N-linked (GlcNAc...) asparagine" evidence="1">
    <location>
        <position position="148"/>
    </location>
</feature>
<feature type="glycosylation site" description="N-linked (GlcNAc...) asparagine" evidence="1">
    <location>
        <position position="165"/>
    </location>
</feature>
<feature type="disulfide bond" evidence="2 8">
    <location>
        <begin position="40"/>
        <end position="69"/>
    </location>
</feature>
<feature type="disulfide bond" evidence="2 8">
    <location>
        <begin position="64"/>
        <end position="124"/>
    </location>
</feature>
<feature type="disulfide bond" evidence="2 8">
    <location>
        <begin position="78"/>
        <end position="85"/>
    </location>
</feature>
<feature type="splice variant" id="VSP_014836" description="In isoform 2." evidence="10">
    <location>
        <begin position="37"/>
        <end position="142"/>
    </location>
</feature>
<feature type="splice variant" id="VSP_014837" description="In isoform 3." evidence="12">
    <original>TV</original>
    <variation>I</variation>
    <location>
        <begin position="156"/>
        <end position="157"/>
    </location>
</feature>
<feature type="sequence variant" description="In strain: 129/SvEv; requires 2 nucleotide substitutions." evidence="3">
    <original>P</original>
    <variation>E</variation>
    <location>
        <position position="41"/>
    </location>
</feature>
<feature type="sequence variant" description="In strain: 129/SvEv." evidence="3">
    <original>TIT</original>
    <variation>NIK</variation>
    <location>
        <begin position="45"/>
        <end position="47"/>
    </location>
</feature>
<feature type="sequence variant" description="In strain: 129/SvEv." evidence="3">
    <original>Q</original>
    <variation>H</variation>
    <location>
        <position position="52"/>
    </location>
</feature>
<feature type="sequence variant" description="In strain: 129/SvEv." evidence="3">
    <original>R</original>
    <variation>W</variation>
    <location>
        <position position="55"/>
    </location>
</feature>
<feature type="sequence variant" description="In strain: 129/SvEv." evidence="3">
    <original>Q</original>
    <variation>E</variation>
    <location>
        <position position="63"/>
    </location>
</feature>
<feature type="sequence variant" description="In strain: 129/SvEv." evidence="3">
    <original>C</original>
    <variation>W</variation>
    <location>
        <position position="85"/>
    </location>
</feature>
<feature type="sequence variant" description="In strain: 129/SvEv." evidence="3">
    <original>S</original>
    <variation>G</variation>
    <location>
        <position position="91"/>
    </location>
</feature>
<feature type="sequence variant" description="In strain: 129/SvEv." evidence="3">
    <original>Q</original>
    <variation>R</variation>
    <location>
        <position position="102"/>
    </location>
</feature>
<feature type="sequence variant" description="In strain: C57BL/6J." evidence="7">
    <original>R</original>
    <variation>T</variation>
    <location>
        <position position="143"/>
    </location>
</feature>
<feature type="mutagenesis site" description="Loss of interaction with TNFRSF14." evidence="8">
    <original>L</original>
    <variation>H</variation>
    <location>
        <position position="44"/>
    </location>
</feature>
<feature type="mutagenesis site" description="Loss of interaction with TNFRSF14." evidence="8">
    <original>R</original>
    <variation>D</variation>
    <location>
        <position position="48"/>
    </location>
</feature>
<feature type="mutagenesis site" description="Loss of interaction with TNFRSF14." evidence="8">
    <original>P</original>
    <variation>A</variation>
    <location>
        <position position="65"/>
    </location>
</feature>
<feature type="mutagenesis site" description="Loss of interaction with TNFRSF14." evidence="8">
    <original>H</original>
    <variation>D</variation>
    <location>
        <position position="136"/>
    </location>
</feature>
<feature type="mutagenesis site" description="No change of phosphorylation implicated in interaction with PTPN6 and PTPN11. Severe reduction of phosphorylation; when associated with F-274 and/or F-299." evidence="3 4">
    <original>Y</original>
    <variation>F</variation>
    <location>
        <position position="245"/>
    </location>
</feature>
<feature type="mutagenesis site" description="No change of phosphorylation implicated in interaction with PTPN6 and PTPN11. Severe reduction of phosphorylation; when associated with F-245 and/or F-299." evidence="3 4">
    <original>Y</original>
    <variation>F</variation>
    <location>
        <position position="274"/>
    </location>
</feature>
<feature type="mutagenesis site" description="No change of phosphorylation implicated in interaction with PTPN6 and PTPN11. Severe reduction of phosphorylation; when associated with F-245 and/or F-274." evidence="3 4">
    <original>Y</original>
    <variation>F</variation>
    <location>
        <position position="299"/>
    </location>
</feature>
<feature type="strand" evidence="15">
    <location>
        <begin position="50"/>
        <end position="55"/>
    </location>
</feature>
<feature type="strand" evidence="15">
    <location>
        <begin position="60"/>
        <end position="67"/>
    </location>
</feature>
<feature type="strand" evidence="15">
    <location>
        <begin position="69"/>
        <end position="71"/>
    </location>
</feature>
<feature type="strand" evidence="15">
    <location>
        <begin position="75"/>
        <end position="80"/>
    </location>
</feature>
<feature type="strand" evidence="15">
    <location>
        <begin position="82"/>
        <end position="87"/>
    </location>
</feature>
<feature type="strand" evidence="15">
    <location>
        <begin position="94"/>
        <end position="99"/>
    </location>
</feature>
<feature type="strand" evidence="15">
    <location>
        <begin position="101"/>
        <end position="104"/>
    </location>
</feature>
<feature type="strand" evidence="15">
    <location>
        <begin position="106"/>
        <end position="111"/>
    </location>
</feature>
<feature type="helix" evidence="15">
    <location>
        <begin position="116"/>
        <end position="118"/>
    </location>
</feature>
<feature type="strand" evidence="15">
    <location>
        <begin position="120"/>
        <end position="128"/>
    </location>
</feature>
<feature type="strand" evidence="15">
    <location>
        <begin position="131"/>
        <end position="134"/>
    </location>
</feature>
<feature type="strand" evidence="15">
    <location>
        <begin position="138"/>
        <end position="143"/>
    </location>
</feature>
<dbReference type="EMBL" id="AY293285">
    <property type="protein sequence ID" value="AAP44002.1"/>
    <property type="molecule type" value="mRNA"/>
</dbReference>
<dbReference type="EMBL" id="AK041334">
    <property type="protein sequence ID" value="BAC30910.1"/>
    <property type="molecule type" value="mRNA"/>
</dbReference>
<dbReference type="CCDS" id="CCDS28195.1">
    <molecule id="Q7TSA3-1"/>
</dbReference>
<dbReference type="CCDS" id="CCDS28196.1">
    <molecule id="Q7TSA3-3"/>
</dbReference>
<dbReference type="RefSeq" id="NP_001032808.2">
    <property type="nucleotide sequence ID" value="NM_001037719.2"/>
</dbReference>
<dbReference type="RefSeq" id="NP_808252.1">
    <property type="nucleotide sequence ID" value="NM_177584.3"/>
</dbReference>
<dbReference type="PDB" id="1XAU">
    <property type="method" value="X-ray"/>
    <property type="resolution" value="1.80 A"/>
    <property type="chains" value="A=30-150"/>
</dbReference>
<dbReference type="PDBsum" id="1XAU"/>
<dbReference type="SMR" id="Q7TSA3"/>
<dbReference type="BioGRID" id="228954">
    <property type="interactions" value="3"/>
</dbReference>
<dbReference type="FunCoup" id="Q7TSA3">
    <property type="interactions" value="684"/>
</dbReference>
<dbReference type="STRING" id="10090.ENSMUSP00000067877"/>
<dbReference type="GlyCosmos" id="Q7TSA3">
    <property type="glycosylation" value="6 sites, No reported glycans"/>
</dbReference>
<dbReference type="GlyGen" id="Q7TSA3">
    <property type="glycosylation" value="6 sites"/>
</dbReference>
<dbReference type="iPTMnet" id="Q7TSA3"/>
<dbReference type="PhosphoSitePlus" id="Q7TSA3"/>
<dbReference type="PaxDb" id="10090-ENSMUSP00000099866"/>
<dbReference type="ProteomicsDB" id="265317">
    <molecule id="Q7TSA3-1"/>
</dbReference>
<dbReference type="ProteomicsDB" id="265318">
    <molecule id="Q7TSA3-2"/>
</dbReference>
<dbReference type="ProteomicsDB" id="265319">
    <molecule id="Q7TSA3-3"/>
</dbReference>
<dbReference type="ABCD" id="Q7TSA3">
    <property type="antibodies" value="9 sequenced antibodies"/>
</dbReference>
<dbReference type="GeneID" id="208154"/>
<dbReference type="KEGG" id="mmu:208154"/>
<dbReference type="UCSC" id="uc007zik.1">
    <molecule id="Q7TSA3-3"/>
    <property type="organism name" value="mouse"/>
</dbReference>
<dbReference type="AGR" id="MGI:2658978"/>
<dbReference type="CTD" id="151888"/>
<dbReference type="MGI" id="MGI:2658978">
    <property type="gene designation" value="Btla"/>
</dbReference>
<dbReference type="eggNOG" id="ENOG502SGTG">
    <property type="taxonomic scope" value="Eukaryota"/>
</dbReference>
<dbReference type="InParanoid" id="Q7TSA3"/>
<dbReference type="OrthoDB" id="9947981at2759"/>
<dbReference type="PhylomeDB" id="Q7TSA3"/>
<dbReference type="TreeFam" id="TF337694"/>
<dbReference type="Reactome" id="R-MMU-9927353">
    <property type="pathway name" value="Co-inhibition by BTLA"/>
</dbReference>
<dbReference type="BioGRID-ORCS" id="208154">
    <property type="hits" value="1 hit in 81 CRISPR screens"/>
</dbReference>
<dbReference type="EvolutionaryTrace" id="Q7TSA3"/>
<dbReference type="PRO" id="PR:Q7TSA3"/>
<dbReference type="Proteomes" id="UP000000589">
    <property type="component" value="Unplaced"/>
</dbReference>
<dbReference type="RNAct" id="Q7TSA3">
    <property type="molecule type" value="protein"/>
</dbReference>
<dbReference type="GO" id="GO:0009897">
    <property type="term" value="C:external side of plasma membrane"/>
    <property type="evidence" value="ECO:0000314"/>
    <property type="project" value="MGI"/>
</dbReference>
<dbReference type="GO" id="GO:0005886">
    <property type="term" value="C:plasma membrane"/>
    <property type="evidence" value="ECO:0000314"/>
    <property type="project" value="MGI"/>
</dbReference>
<dbReference type="GO" id="GO:0038023">
    <property type="term" value="F:signaling receptor activity"/>
    <property type="evidence" value="ECO:0000316"/>
    <property type="project" value="MGI"/>
</dbReference>
<dbReference type="GO" id="GO:0002250">
    <property type="term" value="P:adaptive immune response"/>
    <property type="evidence" value="ECO:0007669"/>
    <property type="project" value="UniProtKB-KW"/>
</dbReference>
<dbReference type="GO" id="GO:0007166">
    <property type="term" value="P:cell surface receptor signaling pathway"/>
    <property type="evidence" value="ECO:0000314"/>
    <property type="project" value="MGI"/>
</dbReference>
<dbReference type="GO" id="GO:0002768">
    <property type="term" value="P:immune response-regulating cell surface receptor signaling pathway"/>
    <property type="evidence" value="ECO:0000315"/>
    <property type="project" value="MGI"/>
</dbReference>
<dbReference type="GO" id="GO:0046642">
    <property type="term" value="P:negative regulation of alpha-beta T cell proliferation"/>
    <property type="evidence" value="ECO:0000315"/>
    <property type="project" value="MGI"/>
</dbReference>
<dbReference type="GO" id="GO:0030889">
    <property type="term" value="P:negative regulation of B cell proliferation"/>
    <property type="evidence" value="ECO:0000315"/>
    <property type="project" value="MGI"/>
</dbReference>
<dbReference type="GO" id="GO:0042130">
    <property type="term" value="P:negative regulation of T cell proliferation"/>
    <property type="evidence" value="ECO:0000315"/>
    <property type="project" value="MGI"/>
</dbReference>
<dbReference type="FunFam" id="2.60.40.10:FF:002143">
    <property type="entry name" value="B- and T-lymphocyte attenuator"/>
    <property type="match status" value="1"/>
</dbReference>
<dbReference type="Gene3D" id="2.60.40.10">
    <property type="entry name" value="Immunoglobulins"/>
    <property type="match status" value="1"/>
</dbReference>
<dbReference type="InterPro" id="IPR039257">
    <property type="entry name" value="BTLA"/>
</dbReference>
<dbReference type="InterPro" id="IPR007110">
    <property type="entry name" value="Ig-like_dom"/>
</dbReference>
<dbReference type="InterPro" id="IPR036179">
    <property type="entry name" value="Ig-like_dom_sf"/>
</dbReference>
<dbReference type="InterPro" id="IPR013783">
    <property type="entry name" value="Ig-like_fold"/>
</dbReference>
<dbReference type="InterPro" id="IPR003599">
    <property type="entry name" value="Ig_sub"/>
</dbReference>
<dbReference type="PANTHER" id="PTHR37996">
    <property type="entry name" value="B- AND T-LYMPHOCYTE ATTENUATOR"/>
    <property type="match status" value="1"/>
</dbReference>
<dbReference type="PANTHER" id="PTHR37996:SF1">
    <property type="entry name" value="B- AND T-LYMPHOCYTE ATTENUATOR"/>
    <property type="match status" value="1"/>
</dbReference>
<dbReference type="SMART" id="SM00409">
    <property type="entry name" value="IG"/>
    <property type="match status" value="1"/>
</dbReference>
<dbReference type="SUPFAM" id="SSF48726">
    <property type="entry name" value="Immunoglobulin"/>
    <property type="match status" value="1"/>
</dbReference>
<dbReference type="PROSITE" id="PS50835">
    <property type="entry name" value="IG_LIKE"/>
    <property type="match status" value="1"/>
</dbReference>
<protein>
    <recommendedName>
        <fullName evidence="11">B- and T-lymphocyte attenuator</fullName>
    </recommendedName>
    <alternativeName>
        <fullName>B- and T-lymphocyte-associated protein</fullName>
    </alternativeName>
    <cdAntigenName>CD272</cdAntigenName>
</protein>
<proteinExistence type="evidence at protein level"/>
<keyword id="KW-0002">3D-structure</keyword>
<keyword id="KW-1064">Adaptive immunity</keyword>
<keyword id="KW-0025">Alternative splicing</keyword>
<keyword id="KW-1003">Cell membrane</keyword>
<keyword id="KW-1015">Disulfide bond</keyword>
<keyword id="KW-0325">Glycoprotein</keyword>
<keyword id="KW-0391">Immunity</keyword>
<keyword id="KW-0393">Immunoglobulin domain</keyword>
<keyword id="KW-0472">Membrane</keyword>
<keyword id="KW-0597">Phosphoprotein</keyword>
<keyword id="KW-0675">Receptor</keyword>
<keyword id="KW-1185">Reference proteome</keyword>
<keyword id="KW-0732">Signal</keyword>
<keyword id="KW-0812">Transmembrane</keyword>
<keyword id="KW-1133">Transmembrane helix</keyword>
<organism>
    <name type="scientific">Mus musculus</name>
    <name type="common">Mouse</name>
    <dbReference type="NCBI Taxonomy" id="10090"/>
    <lineage>
        <taxon>Eukaryota</taxon>
        <taxon>Metazoa</taxon>
        <taxon>Chordata</taxon>
        <taxon>Craniata</taxon>
        <taxon>Vertebrata</taxon>
        <taxon>Euteleostomi</taxon>
        <taxon>Mammalia</taxon>
        <taxon>Eutheria</taxon>
        <taxon>Euarchontoglires</taxon>
        <taxon>Glires</taxon>
        <taxon>Rodentia</taxon>
        <taxon>Myomorpha</taxon>
        <taxon>Muroidea</taxon>
        <taxon>Muridae</taxon>
        <taxon>Murinae</taxon>
        <taxon>Mus</taxon>
        <taxon>Mus</taxon>
    </lineage>
</organism>